<sequence length="68" mass="7615">MINKVINVEGMSCDHCRNAVESALAKLNGVTSAEVDLDKNQVRVDYDENRVSVEQMKEAIEDQGYDVK</sequence>
<name>COPZ_STAHJ</name>
<gene>
    <name type="primary">copZ</name>
    <name type="ordered locus">SH0495</name>
</gene>
<keyword id="KW-0143">Chaperone</keyword>
<keyword id="KW-0186">Copper</keyword>
<keyword id="KW-0963">Cytoplasm</keyword>
<keyword id="KW-0479">Metal-binding</keyword>
<evidence type="ECO:0000250" key="1"/>
<evidence type="ECO:0000255" key="2">
    <source>
        <dbReference type="PROSITE-ProRule" id="PRU00280"/>
    </source>
</evidence>
<evidence type="ECO:0000305" key="3"/>
<organism>
    <name type="scientific">Staphylococcus haemolyticus (strain JCSC1435)</name>
    <dbReference type="NCBI Taxonomy" id="279808"/>
    <lineage>
        <taxon>Bacteria</taxon>
        <taxon>Bacillati</taxon>
        <taxon>Bacillota</taxon>
        <taxon>Bacilli</taxon>
        <taxon>Bacillales</taxon>
        <taxon>Staphylococcaceae</taxon>
        <taxon>Staphylococcus</taxon>
    </lineage>
</organism>
<accession>Q4L971</accession>
<feature type="chain" id="PRO_0000351286" description="Copper chaperone CopZ">
    <location>
        <begin position="1"/>
        <end position="68"/>
    </location>
</feature>
<feature type="domain" description="HMA" evidence="2">
    <location>
        <begin position="2"/>
        <end position="68"/>
    </location>
</feature>
<feature type="binding site" evidence="2">
    <location>
        <position position="13"/>
    </location>
    <ligand>
        <name>Cu cation</name>
        <dbReference type="ChEBI" id="CHEBI:23378"/>
    </ligand>
</feature>
<feature type="binding site" evidence="2">
    <location>
        <position position="16"/>
    </location>
    <ligand>
        <name>Cu cation</name>
        <dbReference type="ChEBI" id="CHEBI:23378"/>
    </ligand>
</feature>
<proteinExistence type="inferred from homology"/>
<dbReference type="EMBL" id="AP006716">
    <property type="protein sequence ID" value="BAE03804.1"/>
    <property type="status" value="ALT_INIT"/>
    <property type="molecule type" value="Genomic_DNA"/>
</dbReference>
<dbReference type="RefSeq" id="WP_029376679.1">
    <property type="nucleotide sequence ID" value="NC_007168.1"/>
</dbReference>
<dbReference type="SMR" id="Q4L971"/>
<dbReference type="GeneID" id="93779897"/>
<dbReference type="KEGG" id="sha:SH0495"/>
<dbReference type="eggNOG" id="COG2608">
    <property type="taxonomic scope" value="Bacteria"/>
</dbReference>
<dbReference type="HOGENOM" id="CLU_134973_10_4_9"/>
<dbReference type="Proteomes" id="UP000000543">
    <property type="component" value="Chromosome"/>
</dbReference>
<dbReference type="GO" id="GO:0005737">
    <property type="term" value="C:cytoplasm"/>
    <property type="evidence" value="ECO:0007669"/>
    <property type="project" value="UniProtKB-SubCell"/>
</dbReference>
<dbReference type="GO" id="GO:0005507">
    <property type="term" value="F:copper ion binding"/>
    <property type="evidence" value="ECO:0007669"/>
    <property type="project" value="InterPro"/>
</dbReference>
<dbReference type="GO" id="GO:0006825">
    <property type="term" value="P:copper ion transport"/>
    <property type="evidence" value="ECO:0007669"/>
    <property type="project" value="InterPro"/>
</dbReference>
<dbReference type="CDD" id="cd00371">
    <property type="entry name" value="HMA"/>
    <property type="match status" value="1"/>
</dbReference>
<dbReference type="FunFam" id="3.30.70.100:FF:000005">
    <property type="entry name" value="Copper-exporting P-type ATPase A"/>
    <property type="match status" value="1"/>
</dbReference>
<dbReference type="Gene3D" id="3.30.70.100">
    <property type="match status" value="1"/>
</dbReference>
<dbReference type="InterPro" id="IPR049740">
    <property type="entry name" value="CopZ"/>
</dbReference>
<dbReference type="InterPro" id="IPR000428">
    <property type="entry name" value="Cu-bd"/>
</dbReference>
<dbReference type="InterPro" id="IPR017969">
    <property type="entry name" value="Heavy-metal-associated_CS"/>
</dbReference>
<dbReference type="InterPro" id="IPR006122">
    <property type="entry name" value="HMA_Cu_ion-bd"/>
</dbReference>
<dbReference type="InterPro" id="IPR006121">
    <property type="entry name" value="HMA_dom"/>
</dbReference>
<dbReference type="InterPro" id="IPR036163">
    <property type="entry name" value="HMA_dom_sf"/>
</dbReference>
<dbReference type="NCBIfam" id="NF033795">
    <property type="entry name" value="chaper_CopZ_Bs"/>
    <property type="match status" value="1"/>
</dbReference>
<dbReference type="NCBIfam" id="TIGR00003">
    <property type="entry name" value="copper ion binding protein"/>
    <property type="match status" value="1"/>
</dbReference>
<dbReference type="PANTHER" id="PTHR46594">
    <property type="entry name" value="P-TYPE CATION-TRANSPORTING ATPASE"/>
    <property type="match status" value="1"/>
</dbReference>
<dbReference type="PANTHER" id="PTHR46594:SF4">
    <property type="entry name" value="P-TYPE CATION-TRANSPORTING ATPASE"/>
    <property type="match status" value="1"/>
</dbReference>
<dbReference type="Pfam" id="PF00403">
    <property type="entry name" value="HMA"/>
    <property type="match status" value="1"/>
</dbReference>
<dbReference type="PRINTS" id="PR00944">
    <property type="entry name" value="CUEXPORT"/>
</dbReference>
<dbReference type="SUPFAM" id="SSF55008">
    <property type="entry name" value="HMA, heavy metal-associated domain"/>
    <property type="match status" value="1"/>
</dbReference>
<dbReference type="PROSITE" id="PS01047">
    <property type="entry name" value="HMA_1"/>
    <property type="match status" value="1"/>
</dbReference>
<dbReference type="PROSITE" id="PS50846">
    <property type="entry name" value="HMA_2"/>
    <property type="match status" value="1"/>
</dbReference>
<protein>
    <recommendedName>
        <fullName>Copper chaperone CopZ</fullName>
    </recommendedName>
</protein>
<reference key="1">
    <citation type="journal article" date="2005" name="J. Bacteriol.">
        <title>Whole-genome sequencing of Staphylococcus haemolyticus uncovers the extreme plasticity of its genome and the evolution of human-colonizing staphylococcal species.</title>
        <authorList>
            <person name="Takeuchi F."/>
            <person name="Watanabe S."/>
            <person name="Baba T."/>
            <person name="Yuzawa H."/>
            <person name="Ito T."/>
            <person name="Morimoto Y."/>
            <person name="Kuroda M."/>
            <person name="Cui L."/>
            <person name="Takahashi M."/>
            <person name="Ankai A."/>
            <person name="Baba S."/>
            <person name="Fukui S."/>
            <person name="Lee J.C."/>
            <person name="Hiramatsu K."/>
        </authorList>
    </citation>
    <scope>NUCLEOTIDE SEQUENCE [LARGE SCALE GENOMIC DNA]</scope>
    <source>
        <strain>JCSC1435</strain>
    </source>
</reference>
<comment type="function">
    <text evidence="1">Chaperone that serves for the intracellular sequestration and transport of Cu(+). Delivers Cu(+) to the copper-exporting P-type ATPase A (CopA) (By similarity).</text>
</comment>
<comment type="subcellular location">
    <subcellularLocation>
        <location evidence="1">Cytoplasm</location>
    </subcellularLocation>
</comment>
<comment type="sequence caution" evidence="3">
    <conflict type="erroneous initiation">
        <sequence resource="EMBL-CDS" id="BAE03804"/>
    </conflict>
</comment>